<accession>P0DSZ1</accession>
<accession>P33042</accession>
<comment type="function">
    <text evidence="1">Might be required to be present in the virion for transcription of early genes after primo infection.</text>
</comment>
<comment type="subcellular location">
    <subcellularLocation>
        <location evidence="1">Virion</location>
    </subcellularLocation>
    <subcellularLocation>
        <location evidence="1">Host cytoplasm</location>
    </subcellularLocation>
    <text evidence="1">Localizes in cytoplasmic virus factories and present in the virion core.</text>
</comment>
<comment type="induction">
    <text evidence="1">Expressed in the late phase of the viral replicative cycle.</text>
</comment>
<comment type="similarity">
    <text evidence="3">Belongs to the orthopoxvirus OPG097 family.</text>
</comment>
<protein>
    <recommendedName>
        <fullName>Protein OPG097</fullName>
    </recommendedName>
    <alternativeName>
        <fullName>Protein L3</fullName>
    </alternativeName>
</protein>
<keyword id="KW-1035">Host cytoplasm</keyword>
<keyword id="KW-0426">Late protein</keyword>
<keyword id="KW-1185">Reference proteome</keyword>
<keyword id="KW-0946">Virion</keyword>
<sequence>MNTRTDVTNDNIDKNPTKRGNKNIPGRNERFNDRNRFNNDGNNRPRLQPSPPPRQDNKCREENGDFINIRLCAYEKEYCNDGYLSPAYYMLKQVDDEEMSCWSELSSLVRSKKAVGFPLLKAAKRISHGSMLYFEQFKNSKVVRLTPQVKCLNDTVIFQTVVILYSMYKRDIYSNEFCFDLVSIPRTNIVFSVNQLMFNICTDILVVLSICGNRLYRTNLPQSCYLNFIHGHETIACRGYEHSNYFFEWLIKNHLSLLTKQTMDILKVKKKYATGAPVNRLLEPGTLVYVPKEDYYFIGISLTDVSISDNVRVLFSTDGIVLEIEDFNIKHLFMAGEMFVRSQSSTIIV</sequence>
<dbReference type="EMBL" id="X67119">
    <property type="protein sequence ID" value="CAA47574.1"/>
    <property type="molecule type" value="Genomic_DNA"/>
</dbReference>
<dbReference type="EMBL" id="S55844">
    <property type="protein sequence ID" value="AAB24671.1"/>
    <property type="molecule type" value="Genomic_DNA"/>
</dbReference>
<dbReference type="EMBL" id="X69198">
    <property type="protein sequence ID" value="CAA49016.1"/>
    <property type="molecule type" value="Genomic_DNA"/>
</dbReference>
<dbReference type="PIR" id="S33089">
    <property type="entry name" value="S33089"/>
</dbReference>
<dbReference type="RefSeq" id="NP_042119.1">
    <property type="nucleotide sequence ID" value="NC_001611.1"/>
</dbReference>
<dbReference type="GeneID" id="1486472"/>
<dbReference type="KEGG" id="vg:1486472"/>
<dbReference type="Proteomes" id="UP000002060">
    <property type="component" value="Segment"/>
</dbReference>
<dbReference type="GO" id="GO:0030430">
    <property type="term" value="C:host cell cytoplasm"/>
    <property type="evidence" value="ECO:0007669"/>
    <property type="project" value="UniProtKB-SubCell"/>
</dbReference>
<dbReference type="GO" id="GO:0044423">
    <property type="term" value="C:virion component"/>
    <property type="evidence" value="ECO:0007669"/>
    <property type="project" value="UniProtKB-KW"/>
</dbReference>
<dbReference type="InterPro" id="IPR005007">
    <property type="entry name" value="Poxvirus_L3/FP4"/>
</dbReference>
<dbReference type="Pfam" id="PF03339">
    <property type="entry name" value="Pox_L3_FP4"/>
    <property type="match status" value="1"/>
</dbReference>
<feature type="chain" id="PRO_0000099623" description="Protein OPG097">
    <location>
        <begin position="1"/>
        <end position="349"/>
    </location>
</feature>
<feature type="region of interest" description="Disordered" evidence="2">
    <location>
        <begin position="1"/>
        <end position="60"/>
    </location>
</feature>
<feature type="compositionally biased region" description="Polar residues" evidence="2">
    <location>
        <begin position="1"/>
        <end position="10"/>
    </location>
</feature>
<feature type="compositionally biased region" description="Basic and acidic residues" evidence="2">
    <location>
        <begin position="27"/>
        <end position="37"/>
    </location>
</feature>
<feature type="compositionally biased region" description="Low complexity" evidence="2">
    <location>
        <begin position="38"/>
        <end position="47"/>
    </location>
</feature>
<reference key="1">
    <citation type="journal article" date="1993" name="Virus Res.">
        <title>Nucleotide sequence analysis of variola virus HindIII M, L, I genome fragments.</title>
        <authorList>
            <person name="Shchelkunov S.N."/>
            <person name="Blinov V.M."/>
            <person name="Totmenin A.V."/>
            <person name="Marennikova S.S."/>
            <person name="Kolykhalov A.A."/>
            <person name="Frolov I.V."/>
            <person name="Chizhikov V.E."/>
            <person name="Gytorov V.V."/>
            <person name="Gashikov P.V."/>
            <person name="Belanov E.F."/>
            <person name="Belavin P.A."/>
            <person name="Resenchuk S.M."/>
            <person name="Andzhaparidze O.G."/>
            <person name="Sandakhchiev L.S."/>
        </authorList>
    </citation>
    <scope>NUCLEOTIDE SEQUENCE [GENOMIC DNA]</scope>
</reference>
<reference key="2">
    <citation type="journal article" date="1993" name="FEBS Lett.">
        <title>Genes of variola and vaccinia viruses necessary to overcome the host protective mechanisms.</title>
        <authorList>
            <person name="Shchelkunov S.N."/>
            <person name="Blinov V.M."/>
            <person name="Sandakhchiev L.S."/>
        </authorList>
    </citation>
    <scope>NUCLEOTIDE SEQUENCE [LARGE SCALE GENOMIC DNA]</scope>
</reference>
<evidence type="ECO:0000250" key="1">
    <source>
        <dbReference type="UniProtKB" id="P07614"/>
    </source>
</evidence>
<evidence type="ECO:0000256" key="2">
    <source>
        <dbReference type="SAM" id="MobiDB-lite"/>
    </source>
</evidence>
<evidence type="ECO:0000305" key="3"/>
<organismHost>
    <name type="scientific">Homo sapiens</name>
    <name type="common">Human</name>
    <dbReference type="NCBI Taxonomy" id="9606"/>
</organismHost>
<name>PG097_VAR67</name>
<organism>
    <name type="scientific">Variola virus (isolate Human/India/Ind3/1967)</name>
    <name type="common">VARV</name>
    <name type="synonym">Smallpox virus</name>
    <dbReference type="NCBI Taxonomy" id="587200"/>
    <lineage>
        <taxon>Viruses</taxon>
        <taxon>Varidnaviria</taxon>
        <taxon>Bamfordvirae</taxon>
        <taxon>Nucleocytoviricota</taxon>
        <taxon>Pokkesviricetes</taxon>
        <taxon>Chitovirales</taxon>
        <taxon>Poxviridae</taxon>
        <taxon>Chordopoxvirinae</taxon>
        <taxon>Orthopoxvirus</taxon>
        <taxon>Variola virus</taxon>
    </lineage>
</organism>
<gene>
    <name type="primary">OPG097</name>
    <name type="ORF">L3L</name>
    <name type="ORF">M3L</name>
</gene>
<proteinExistence type="inferred from homology"/>